<proteinExistence type="inferred from homology"/>
<keyword id="KW-0378">Hydrolase</keyword>
<keyword id="KW-1185">Reference proteome</keyword>
<accession>Q898A3</accession>
<sequence>MMQSKIESIIEECRKYTREGEVASYIPELKKADKDALGIYIDKLDGNEFCAGDYDTKFTIQSISKIIALIIAIMDNGMEKVLSKVGVEPSAYSFNSIVTLEVKNANKPLNPMINAGAIATVSLIKGNSPEEIIERILEFTRKVTGNKNIKVNEEVYQSEKKTGDRNRSLAYFMKGTGIIEKDVEKVLDAYFQQCSIEVTCKDIAKIASFLANDGVLPSTGERIIPAEVAKIVKAVMVTCGMYDASGSFAVKVGIPSKSGVGGGILATVPGVMGIGVFGPALDKKGNSIAGVKILERLSEELNLSIF</sequence>
<gene>
    <name evidence="1" type="primary">glsA</name>
    <name type="ordered locus">CTC_00566</name>
</gene>
<evidence type="ECO:0000255" key="1">
    <source>
        <dbReference type="HAMAP-Rule" id="MF_00313"/>
    </source>
</evidence>
<organism>
    <name type="scientific">Clostridium tetani (strain Massachusetts / E88)</name>
    <dbReference type="NCBI Taxonomy" id="212717"/>
    <lineage>
        <taxon>Bacteria</taxon>
        <taxon>Bacillati</taxon>
        <taxon>Bacillota</taxon>
        <taxon>Clostridia</taxon>
        <taxon>Eubacteriales</taxon>
        <taxon>Clostridiaceae</taxon>
        <taxon>Clostridium</taxon>
    </lineage>
</organism>
<protein>
    <recommendedName>
        <fullName evidence="1">Glutaminase</fullName>
        <ecNumber evidence="1">3.5.1.2</ecNumber>
    </recommendedName>
</protein>
<reference key="1">
    <citation type="journal article" date="2003" name="Proc. Natl. Acad. Sci. U.S.A.">
        <title>The genome sequence of Clostridium tetani, the causative agent of tetanus disease.</title>
        <authorList>
            <person name="Brueggemann H."/>
            <person name="Baeumer S."/>
            <person name="Fricke W.F."/>
            <person name="Wiezer A."/>
            <person name="Liesegang H."/>
            <person name="Decker I."/>
            <person name="Herzberg C."/>
            <person name="Martinez-Arias R."/>
            <person name="Merkl R."/>
            <person name="Henne A."/>
            <person name="Gottschalk G."/>
        </authorList>
    </citation>
    <scope>NUCLEOTIDE SEQUENCE [LARGE SCALE GENOMIC DNA]</scope>
    <source>
        <strain>Massachusetts / E88</strain>
    </source>
</reference>
<name>GLSA_CLOTE</name>
<feature type="chain" id="PRO_0000110604" description="Glutaminase">
    <location>
        <begin position="1"/>
        <end position="306"/>
    </location>
</feature>
<feature type="binding site" evidence="1">
    <location>
        <position position="62"/>
    </location>
    <ligand>
        <name>substrate</name>
    </ligand>
</feature>
<feature type="binding site" evidence="1">
    <location>
        <position position="114"/>
    </location>
    <ligand>
        <name>substrate</name>
    </ligand>
</feature>
<feature type="binding site" evidence="1">
    <location>
        <position position="159"/>
    </location>
    <ligand>
        <name>substrate</name>
    </ligand>
</feature>
<feature type="binding site" evidence="1">
    <location>
        <position position="166"/>
    </location>
    <ligand>
        <name>substrate</name>
    </ligand>
</feature>
<feature type="binding site" evidence="1">
    <location>
        <position position="190"/>
    </location>
    <ligand>
        <name>substrate</name>
    </ligand>
</feature>
<feature type="binding site" evidence="1">
    <location>
        <position position="242"/>
    </location>
    <ligand>
        <name>substrate</name>
    </ligand>
</feature>
<feature type="binding site" evidence="1">
    <location>
        <position position="260"/>
    </location>
    <ligand>
        <name>substrate</name>
    </ligand>
</feature>
<comment type="catalytic activity">
    <reaction evidence="1">
        <text>L-glutamine + H2O = L-glutamate + NH4(+)</text>
        <dbReference type="Rhea" id="RHEA:15889"/>
        <dbReference type="ChEBI" id="CHEBI:15377"/>
        <dbReference type="ChEBI" id="CHEBI:28938"/>
        <dbReference type="ChEBI" id="CHEBI:29985"/>
        <dbReference type="ChEBI" id="CHEBI:58359"/>
        <dbReference type="EC" id="3.5.1.2"/>
    </reaction>
</comment>
<comment type="subunit">
    <text evidence="1">Homotetramer.</text>
</comment>
<comment type="similarity">
    <text evidence="1">Belongs to the glutaminase family.</text>
</comment>
<dbReference type="EC" id="3.5.1.2" evidence="1"/>
<dbReference type="EMBL" id="AE015927">
    <property type="protein sequence ID" value="AAO35183.1"/>
    <property type="molecule type" value="Genomic_DNA"/>
</dbReference>
<dbReference type="SMR" id="Q898A3"/>
<dbReference type="STRING" id="212717.CTC_00566"/>
<dbReference type="KEGG" id="ctc:CTC_00566"/>
<dbReference type="HOGENOM" id="CLU_027932_1_0_9"/>
<dbReference type="Proteomes" id="UP000001412">
    <property type="component" value="Chromosome"/>
</dbReference>
<dbReference type="GO" id="GO:0004359">
    <property type="term" value="F:glutaminase activity"/>
    <property type="evidence" value="ECO:0007669"/>
    <property type="project" value="UniProtKB-UniRule"/>
</dbReference>
<dbReference type="GO" id="GO:0006537">
    <property type="term" value="P:glutamate biosynthetic process"/>
    <property type="evidence" value="ECO:0007669"/>
    <property type="project" value="TreeGrafter"/>
</dbReference>
<dbReference type="GO" id="GO:0006543">
    <property type="term" value="P:glutamine catabolic process"/>
    <property type="evidence" value="ECO:0007669"/>
    <property type="project" value="TreeGrafter"/>
</dbReference>
<dbReference type="FunFam" id="3.40.710.10:FF:000005">
    <property type="entry name" value="Glutaminase"/>
    <property type="match status" value="1"/>
</dbReference>
<dbReference type="Gene3D" id="3.40.710.10">
    <property type="entry name" value="DD-peptidase/beta-lactamase superfamily"/>
    <property type="match status" value="1"/>
</dbReference>
<dbReference type="HAMAP" id="MF_00313">
    <property type="entry name" value="Glutaminase"/>
    <property type="match status" value="1"/>
</dbReference>
<dbReference type="InterPro" id="IPR012338">
    <property type="entry name" value="Beta-lactam/transpept-like"/>
</dbReference>
<dbReference type="InterPro" id="IPR015868">
    <property type="entry name" value="Glutaminase"/>
</dbReference>
<dbReference type="NCBIfam" id="TIGR03814">
    <property type="entry name" value="Gln_ase"/>
    <property type="match status" value="1"/>
</dbReference>
<dbReference type="PANTHER" id="PTHR12544">
    <property type="entry name" value="GLUTAMINASE"/>
    <property type="match status" value="1"/>
</dbReference>
<dbReference type="PANTHER" id="PTHR12544:SF29">
    <property type="entry name" value="GLUTAMINASE"/>
    <property type="match status" value="1"/>
</dbReference>
<dbReference type="Pfam" id="PF04960">
    <property type="entry name" value="Glutaminase"/>
    <property type="match status" value="1"/>
</dbReference>
<dbReference type="SUPFAM" id="SSF56601">
    <property type="entry name" value="beta-lactamase/transpeptidase-like"/>
    <property type="match status" value="1"/>
</dbReference>